<keyword id="KW-0997">Cell inner membrane</keyword>
<keyword id="KW-1003">Cell membrane</keyword>
<keyword id="KW-0249">Electron transport</keyword>
<keyword id="KW-0472">Membrane</keyword>
<keyword id="KW-1278">Translocase</keyword>
<keyword id="KW-0812">Transmembrane</keyword>
<keyword id="KW-1133">Transmembrane helix</keyword>
<keyword id="KW-0813">Transport</keyword>
<evidence type="ECO:0000255" key="1">
    <source>
        <dbReference type="HAMAP-Rule" id="MF_00459"/>
    </source>
</evidence>
<name>RNFA_SHEPC</name>
<sequence>MTEYLLLLISTVLVNNFVLVKFLGLCPFMGVSSKLESAIGMSMATTFVLTLASILSYLVNQYLLLPFDLSYLRTMSFILVIAVVVQFTEMVVQKTSAALHRALGIYLPLITTNCAVLGVALLNVNEKHDFIQSAIYGFGAAVGFSLVLILFSAMRERLAAADVPLPFKGGAIAMITAGLMSLAFMGFTGLVK</sequence>
<accession>A4Y6J0</accession>
<reference key="1">
    <citation type="submission" date="2007-04" db="EMBL/GenBank/DDBJ databases">
        <title>Complete sequence of Shewanella putrefaciens CN-32.</title>
        <authorList>
            <consortium name="US DOE Joint Genome Institute"/>
            <person name="Copeland A."/>
            <person name="Lucas S."/>
            <person name="Lapidus A."/>
            <person name="Barry K."/>
            <person name="Detter J.C."/>
            <person name="Glavina del Rio T."/>
            <person name="Hammon N."/>
            <person name="Israni S."/>
            <person name="Dalin E."/>
            <person name="Tice H."/>
            <person name="Pitluck S."/>
            <person name="Chain P."/>
            <person name="Malfatti S."/>
            <person name="Shin M."/>
            <person name="Vergez L."/>
            <person name="Schmutz J."/>
            <person name="Larimer F."/>
            <person name="Land M."/>
            <person name="Hauser L."/>
            <person name="Kyrpides N."/>
            <person name="Mikhailova N."/>
            <person name="Romine M.F."/>
            <person name="Fredrickson J."/>
            <person name="Tiedje J."/>
            <person name="Richardson P."/>
        </authorList>
    </citation>
    <scope>NUCLEOTIDE SEQUENCE [LARGE SCALE GENOMIC DNA]</scope>
    <source>
        <strain>CN-32 / ATCC BAA-453</strain>
    </source>
</reference>
<gene>
    <name evidence="1" type="primary">rnfA</name>
    <name type="ordered locus">Sputcn32_1850</name>
</gene>
<organism>
    <name type="scientific">Shewanella putrefaciens (strain CN-32 / ATCC BAA-453)</name>
    <dbReference type="NCBI Taxonomy" id="319224"/>
    <lineage>
        <taxon>Bacteria</taxon>
        <taxon>Pseudomonadati</taxon>
        <taxon>Pseudomonadota</taxon>
        <taxon>Gammaproteobacteria</taxon>
        <taxon>Alteromonadales</taxon>
        <taxon>Shewanellaceae</taxon>
        <taxon>Shewanella</taxon>
    </lineage>
</organism>
<comment type="function">
    <text evidence="1">Part of a membrane-bound complex that couples electron transfer with translocation of ions across the membrane.</text>
</comment>
<comment type="subunit">
    <text evidence="1">The complex is composed of six subunits: RnfA, RnfB, RnfC, RnfD, RnfE and RnfG.</text>
</comment>
<comment type="subcellular location">
    <subcellularLocation>
        <location evidence="1">Cell inner membrane</location>
        <topology evidence="1">Multi-pass membrane protein</topology>
    </subcellularLocation>
</comment>
<comment type="similarity">
    <text evidence="1">Belongs to the NqrDE/RnfAE family.</text>
</comment>
<protein>
    <recommendedName>
        <fullName evidence="1">Ion-translocating oxidoreductase complex subunit A</fullName>
        <ecNumber evidence="1">7.-.-.-</ecNumber>
    </recommendedName>
    <alternativeName>
        <fullName evidence="1">Rnf electron transport complex subunit A</fullName>
    </alternativeName>
</protein>
<proteinExistence type="inferred from homology"/>
<feature type="chain" id="PRO_1000013551" description="Ion-translocating oxidoreductase complex subunit A">
    <location>
        <begin position="1"/>
        <end position="192"/>
    </location>
</feature>
<feature type="transmembrane region" description="Helical" evidence="1">
    <location>
        <begin position="5"/>
        <end position="25"/>
    </location>
</feature>
<feature type="transmembrane region" description="Helical" evidence="1">
    <location>
        <begin position="39"/>
        <end position="59"/>
    </location>
</feature>
<feature type="transmembrane region" description="Helical" evidence="1">
    <location>
        <begin position="65"/>
        <end position="85"/>
    </location>
</feature>
<feature type="transmembrane region" description="Helical" evidence="1">
    <location>
        <begin position="102"/>
        <end position="122"/>
    </location>
</feature>
<feature type="transmembrane region" description="Helical" evidence="1">
    <location>
        <begin position="134"/>
        <end position="154"/>
    </location>
</feature>
<feature type="transmembrane region" description="Helical" evidence="1">
    <location>
        <begin position="171"/>
        <end position="191"/>
    </location>
</feature>
<dbReference type="EC" id="7.-.-.-" evidence="1"/>
<dbReference type="EMBL" id="CP000681">
    <property type="protein sequence ID" value="ABP75573.1"/>
    <property type="molecule type" value="Genomic_DNA"/>
</dbReference>
<dbReference type="SMR" id="A4Y6J0"/>
<dbReference type="STRING" id="319224.Sputcn32_1850"/>
<dbReference type="KEGG" id="spc:Sputcn32_1850"/>
<dbReference type="eggNOG" id="COG4657">
    <property type="taxonomic scope" value="Bacteria"/>
</dbReference>
<dbReference type="HOGENOM" id="CLU_095255_1_0_6"/>
<dbReference type="GO" id="GO:0005886">
    <property type="term" value="C:plasma membrane"/>
    <property type="evidence" value="ECO:0007669"/>
    <property type="project" value="UniProtKB-SubCell"/>
</dbReference>
<dbReference type="GO" id="GO:0022900">
    <property type="term" value="P:electron transport chain"/>
    <property type="evidence" value="ECO:0007669"/>
    <property type="project" value="UniProtKB-UniRule"/>
</dbReference>
<dbReference type="HAMAP" id="MF_00459">
    <property type="entry name" value="RsxA_RnfA"/>
    <property type="match status" value="1"/>
</dbReference>
<dbReference type="InterPro" id="IPR011293">
    <property type="entry name" value="Ion_transpt_RnfA/RsxA"/>
</dbReference>
<dbReference type="InterPro" id="IPR003667">
    <property type="entry name" value="NqrDE/RnfAE"/>
</dbReference>
<dbReference type="InterPro" id="IPR050133">
    <property type="entry name" value="NqrDE/RnfAE_oxidrdctase"/>
</dbReference>
<dbReference type="NCBIfam" id="NF003481">
    <property type="entry name" value="PRK05151.1"/>
    <property type="match status" value="1"/>
</dbReference>
<dbReference type="NCBIfam" id="TIGR01943">
    <property type="entry name" value="rnfA"/>
    <property type="match status" value="1"/>
</dbReference>
<dbReference type="PANTHER" id="PTHR30335">
    <property type="entry name" value="INTEGRAL MEMBRANE PROTEIN OF SOXR-REDUCING COMPLEX"/>
    <property type="match status" value="1"/>
</dbReference>
<dbReference type="PANTHER" id="PTHR30335:SF0">
    <property type="entry name" value="ION-TRANSLOCATING OXIDOREDUCTASE COMPLEX SUBUNIT A"/>
    <property type="match status" value="1"/>
</dbReference>
<dbReference type="Pfam" id="PF02508">
    <property type="entry name" value="Rnf-Nqr"/>
    <property type="match status" value="1"/>
</dbReference>
<dbReference type="PIRSF" id="PIRSF006102">
    <property type="entry name" value="NQR_DE"/>
    <property type="match status" value="1"/>
</dbReference>